<accession>P58850</accession>
<sequence>MTDTNPENVNNSKITIICSAPDLASQNIKKHLLALREWKPLELPENSGFSAVLESADGKFRLVDIEEIHVFQDGLDKKLEAAGLPAELIIFASKHRSKEEVKSLTVHCTGNSSNEARLGGHPKELAVSSPPAMKSILMEMKRLAKVKGLDYDVTLEVTHHGPTELNVPSLYAEIGSTEGQWEEPVPGEIVARAILTVSLEKVPTAVGFGGGHYAMRQTGLLLETAISFGHNFPKYQLEFVDEALIRQAVEKSNAEFAYFDRKSMKSADRKRISQILEKLGLKVLKESEIREKYGREE</sequence>
<feature type="chain" id="PRO_0000158965" description="D-aminoacyl-tRNA deacylase">
    <location>
        <begin position="1"/>
        <end position="297"/>
    </location>
</feature>
<proteinExistence type="inferred from homology"/>
<gene>
    <name evidence="1" type="primary">dtdA</name>
    <name type="ordered locus">MA_2046</name>
</gene>
<evidence type="ECO:0000255" key="1">
    <source>
        <dbReference type="HAMAP-Rule" id="MF_00562"/>
    </source>
</evidence>
<reference key="1">
    <citation type="journal article" date="2002" name="Genome Res.">
        <title>The genome of Methanosarcina acetivorans reveals extensive metabolic and physiological diversity.</title>
        <authorList>
            <person name="Galagan J.E."/>
            <person name="Nusbaum C."/>
            <person name="Roy A."/>
            <person name="Endrizzi M.G."/>
            <person name="Macdonald P."/>
            <person name="FitzHugh W."/>
            <person name="Calvo S."/>
            <person name="Engels R."/>
            <person name="Smirnov S."/>
            <person name="Atnoor D."/>
            <person name="Brown A."/>
            <person name="Allen N."/>
            <person name="Naylor J."/>
            <person name="Stange-Thomann N."/>
            <person name="DeArellano K."/>
            <person name="Johnson R."/>
            <person name="Linton L."/>
            <person name="McEwan P."/>
            <person name="McKernan K."/>
            <person name="Talamas J."/>
            <person name="Tirrell A."/>
            <person name="Ye W."/>
            <person name="Zimmer A."/>
            <person name="Barber R.D."/>
            <person name="Cann I."/>
            <person name="Graham D.E."/>
            <person name="Grahame D.A."/>
            <person name="Guss A.M."/>
            <person name="Hedderich R."/>
            <person name="Ingram-Smith C."/>
            <person name="Kuettner H.C."/>
            <person name="Krzycki J.A."/>
            <person name="Leigh J.A."/>
            <person name="Li W."/>
            <person name="Liu J."/>
            <person name="Mukhopadhyay B."/>
            <person name="Reeve J.N."/>
            <person name="Smith K."/>
            <person name="Springer T.A."/>
            <person name="Umayam L.A."/>
            <person name="White O."/>
            <person name="White R.H."/>
            <person name="de Macario E.C."/>
            <person name="Ferry J.G."/>
            <person name="Jarrell K.F."/>
            <person name="Jing H."/>
            <person name="Macario A.J.L."/>
            <person name="Paulsen I.T."/>
            <person name="Pritchett M."/>
            <person name="Sowers K.R."/>
            <person name="Swanson R.V."/>
            <person name="Zinder S.H."/>
            <person name="Lander E."/>
            <person name="Metcalf W.W."/>
            <person name="Birren B."/>
        </authorList>
    </citation>
    <scope>NUCLEOTIDE SEQUENCE [LARGE SCALE GENOMIC DNA]</scope>
    <source>
        <strain>ATCC 35395 / DSM 2834 / JCM 12185 / C2A</strain>
    </source>
</reference>
<keyword id="KW-0378">Hydrolase</keyword>
<keyword id="KW-0479">Metal-binding</keyword>
<keyword id="KW-1185">Reference proteome</keyword>
<keyword id="KW-0862">Zinc</keyword>
<protein>
    <recommendedName>
        <fullName evidence="1">D-aminoacyl-tRNA deacylase</fullName>
        <ecNumber evidence="1">3.1.1.96</ecNumber>
    </recommendedName>
    <alternativeName>
        <fullName>D-tyrosyl-tRNA(Tyr) deacylase</fullName>
    </alternativeName>
</protein>
<name>DTDA_METAC</name>
<organism>
    <name type="scientific">Methanosarcina acetivorans (strain ATCC 35395 / DSM 2834 / JCM 12185 / C2A)</name>
    <dbReference type="NCBI Taxonomy" id="188937"/>
    <lineage>
        <taxon>Archaea</taxon>
        <taxon>Methanobacteriati</taxon>
        <taxon>Methanobacteriota</taxon>
        <taxon>Stenosarchaea group</taxon>
        <taxon>Methanomicrobia</taxon>
        <taxon>Methanosarcinales</taxon>
        <taxon>Methanosarcinaceae</taxon>
        <taxon>Methanosarcina</taxon>
    </lineage>
</organism>
<comment type="function">
    <text evidence="1">D-aminoacyl-tRNA deacylase with broad substrate specificity. By recycling D-aminoacyl-tRNA to D-amino acids and free tRNA molecules, this enzyme counteracts the toxicity associated with the formation of D-aminoacyl-tRNA entities in vivo.</text>
</comment>
<comment type="catalytic activity">
    <reaction evidence="1">
        <text>a D-aminoacyl-tRNA + H2O = a tRNA + a D-alpha-amino acid + H(+)</text>
        <dbReference type="Rhea" id="RHEA:13953"/>
        <dbReference type="Rhea" id="RHEA-COMP:10123"/>
        <dbReference type="Rhea" id="RHEA-COMP:10124"/>
        <dbReference type="ChEBI" id="CHEBI:15377"/>
        <dbReference type="ChEBI" id="CHEBI:15378"/>
        <dbReference type="ChEBI" id="CHEBI:59871"/>
        <dbReference type="ChEBI" id="CHEBI:78442"/>
        <dbReference type="ChEBI" id="CHEBI:79333"/>
        <dbReference type="EC" id="3.1.1.96"/>
    </reaction>
</comment>
<comment type="catalytic activity">
    <reaction evidence="1">
        <text>glycyl-tRNA(Ala) + H2O = tRNA(Ala) + glycine + H(+)</text>
        <dbReference type="Rhea" id="RHEA:53744"/>
        <dbReference type="Rhea" id="RHEA-COMP:9657"/>
        <dbReference type="Rhea" id="RHEA-COMP:13640"/>
        <dbReference type="ChEBI" id="CHEBI:15377"/>
        <dbReference type="ChEBI" id="CHEBI:15378"/>
        <dbReference type="ChEBI" id="CHEBI:57305"/>
        <dbReference type="ChEBI" id="CHEBI:78442"/>
        <dbReference type="ChEBI" id="CHEBI:78522"/>
        <dbReference type="EC" id="3.1.1.96"/>
    </reaction>
</comment>
<comment type="cofactor">
    <cofactor evidence="1">
        <name>Zn(2+)</name>
        <dbReference type="ChEBI" id="CHEBI:29105"/>
    </cofactor>
    <text evidence="1">Binds 2 Zn(2+) ions per subunit.</text>
</comment>
<comment type="subunit">
    <text evidence="1">Monomer.</text>
</comment>
<comment type="similarity">
    <text evidence="1">Belongs to the DtdA deacylase family.</text>
</comment>
<dbReference type="EC" id="3.1.1.96" evidence="1"/>
<dbReference type="EMBL" id="AE010299">
    <property type="protein sequence ID" value="AAM05448.1"/>
    <property type="molecule type" value="Genomic_DNA"/>
</dbReference>
<dbReference type="RefSeq" id="WP_011022038.1">
    <property type="nucleotide sequence ID" value="NC_003552.1"/>
</dbReference>
<dbReference type="SMR" id="P58850"/>
<dbReference type="FunCoup" id="P58850">
    <property type="interactions" value="3"/>
</dbReference>
<dbReference type="STRING" id="188937.MA_2046"/>
<dbReference type="EnsemblBacteria" id="AAM05448">
    <property type="protein sequence ID" value="AAM05448"/>
    <property type="gene ID" value="MA_2046"/>
</dbReference>
<dbReference type="GeneID" id="1473935"/>
<dbReference type="KEGG" id="mac:MA_2046"/>
<dbReference type="HOGENOM" id="CLU_056464_1_0_2"/>
<dbReference type="InParanoid" id="P58850"/>
<dbReference type="OrthoDB" id="9863at2157"/>
<dbReference type="PhylomeDB" id="P58850"/>
<dbReference type="Proteomes" id="UP000002487">
    <property type="component" value="Chromosome"/>
</dbReference>
<dbReference type="GO" id="GO:0051499">
    <property type="term" value="F:D-aminoacyl-tRNA deacylase activity"/>
    <property type="evidence" value="ECO:0000318"/>
    <property type="project" value="GO_Central"/>
</dbReference>
<dbReference type="GO" id="GO:0008270">
    <property type="term" value="F:zinc ion binding"/>
    <property type="evidence" value="ECO:0007669"/>
    <property type="project" value="UniProtKB-UniRule"/>
</dbReference>
<dbReference type="GO" id="GO:0019478">
    <property type="term" value="P:D-amino acid catabolic process"/>
    <property type="evidence" value="ECO:0007669"/>
    <property type="project" value="UniProtKB-UniRule"/>
</dbReference>
<dbReference type="FunFam" id="3.40.50.10700:FF:000002">
    <property type="entry name" value="D-aminoacyl-tRNA deacylase"/>
    <property type="match status" value="1"/>
</dbReference>
<dbReference type="Gene3D" id="3.40.50.10700">
    <property type="entry name" value="AF0625-like"/>
    <property type="match status" value="1"/>
</dbReference>
<dbReference type="Gene3D" id="3.40.630.50">
    <property type="entry name" value="AF0625-like"/>
    <property type="match status" value="1"/>
</dbReference>
<dbReference type="HAMAP" id="MF_00562">
    <property type="entry name" value="Deacylase_DtdA"/>
    <property type="match status" value="1"/>
</dbReference>
<dbReference type="InterPro" id="IPR018033">
    <property type="entry name" value="Deacylase_DtdA_archaea"/>
</dbReference>
<dbReference type="InterPro" id="IPR007508">
    <property type="entry name" value="DtdA"/>
</dbReference>
<dbReference type="NCBIfam" id="NF003073">
    <property type="entry name" value="PRK03995.1-5"/>
    <property type="match status" value="1"/>
</dbReference>
<dbReference type="PANTHER" id="PTHR34667">
    <property type="entry name" value="D-AMINOACYL-TRNA DEACYLASE"/>
    <property type="match status" value="1"/>
</dbReference>
<dbReference type="PANTHER" id="PTHR34667:SF1">
    <property type="entry name" value="D-AMINOACYL-TRNA DEACYLASE"/>
    <property type="match status" value="1"/>
</dbReference>
<dbReference type="Pfam" id="PF04414">
    <property type="entry name" value="tRNA_deacylase"/>
    <property type="match status" value="1"/>
</dbReference>
<dbReference type="PIRSF" id="PIRSF016210">
    <property type="entry name" value="UCP016210"/>
    <property type="match status" value="1"/>
</dbReference>
<dbReference type="SUPFAM" id="SSF142535">
    <property type="entry name" value="AF0625-like"/>
    <property type="match status" value="1"/>
</dbReference>